<keyword id="KW-0963">Cytoplasm</keyword>
<keyword id="KW-0460">Magnesium</keyword>
<keyword id="KW-0479">Metal-binding</keyword>
<keyword id="KW-0548">Nucleotidyltransferase</keyword>
<keyword id="KW-1185">Reference proteome</keyword>
<keyword id="KW-0694">RNA-binding</keyword>
<keyword id="KW-0808">Transferase</keyword>
<feature type="chain" id="PRO_0000329728" description="Polyribonucleotide nucleotidyltransferase">
    <location>
        <begin position="1"/>
        <end position="722"/>
    </location>
</feature>
<feature type="domain" description="KH" evidence="1">
    <location>
        <begin position="553"/>
        <end position="612"/>
    </location>
</feature>
<feature type="domain" description="S1 motif" evidence="1">
    <location>
        <begin position="622"/>
        <end position="690"/>
    </location>
</feature>
<feature type="region of interest" description="Disordered" evidence="2">
    <location>
        <begin position="696"/>
        <end position="722"/>
    </location>
</feature>
<feature type="binding site" evidence="1">
    <location>
        <position position="486"/>
    </location>
    <ligand>
        <name>Mg(2+)</name>
        <dbReference type="ChEBI" id="CHEBI:18420"/>
    </ligand>
</feature>
<feature type="binding site" evidence="1">
    <location>
        <position position="492"/>
    </location>
    <ligand>
        <name>Mg(2+)</name>
        <dbReference type="ChEBI" id="CHEBI:18420"/>
    </ligand>
</feature>
<proteinExistence type="inferred from homology"/>
<dbReference type="EC" id="2.7.7.8" evidence="1"/>
<dbReference type="EMBL" id="CP000113">
    <property type="protein sequence ID" value="ABF92645.1"/>
    <property type="molecule type" value="Genomic_DNA"/>
</dbReference>
<dbReference type="RefSeq" id="WP_011552157.1">
    <property type="nucleotide sequence ID" value="NC_008095.1"/>
</dbReference>
<dbReference type="SMR" id="Q1DAM1"/>
<dbReference type="STRING" id="246197.MXAN_2073"/>
<dbReference type="EnsemblBacteria" id="ABF92645">
    <property type="protein sequence ID" value="ABF92645"/>
    <property type="gene ID" value="MXAN_2073"/>
</dbReference>
<dbReference type="GeneID" id="41359481"/>
<dbReference type="KEGG" id="mxa:MXAN_2073"/>
<dbReference type="eggNOG" id="COG1185">
    <property type="taxonomic scope" value="Bacteria"/>
</dbReference>
<dbReference type="HOGENOM" id="CLU_004217_2_2_7"/>
<dbReference type="OrthoDB" id="9804305at2"/>
<dbReference type="Proteomes" id="UP000002402">
    <property type="component" value="Chromosome"/>
</dbReference>
<dbReference type="GO" id="GO:0005829">
    <property type="term" value="C:cytosol"/>
    <property type="evidence" value="ECO:0007669"/>
    <property type="project" value="TreeGrafter"/>
</dbReference>
<dbReference type="GO" id="GO:0000175">
    <property type="term" value="F:3'-5'-RNA exonuclease activity"/>
    <property type="evidence" value="ECO:0007669"/>
    <property type="project" value="TreeGrafter"/>
</dbReference>
<dbReference type="GO" id="GO:0000287">
    <property type="term" value="F:magnesium ion binding"/>
    <property type="evidence" value="ECO:0007669"/>
    <property type="project" value="UniProtKB-UniRule"/>
</dbReference>
<dbReference type="GO" id="GO:0004654">
    <property type="term" value="F:polyribonucleotide nucleotidyltransferase activity"/>
    <property type="evidence" value="ECO:0007669"/>
    <property type="project" value="UniProtKB-UniRule"/>
</dbReference>
<dbReference type="GO" id="GO:0003723">
    <property type="term" value="F:RNA binding"/>
    <property type="evidence" value="ECO:0007669"/>
    <property type="project" value="UniProtKB-UniRule"/>
</dbReference>
<dbReference type="GO" id="GO:0006402">
    <property type="term" value="P:mRNA catabolic process"/>
    <property type="evidence" value="ECO:0007669"/>
    <property type="project" value="UniProtKB-UniRule"/>
</dbReference>
<dbReference type="GO" id="GO:0006396">
    <property type="term" value="P:RNA processing"/>
    <property type="evidence" value="ECO:0007669"/>
    <property type="project" value="InterPro"/>
</dbReference>
<dbReference type="CDD" id="cd02393">
    <property type="entry name" value="KH-I_PNPase"/>
    <property type="match status" value="1"/>
</dbReference>
<dbReference type="CDD" id="cd11363">
    <property type="entry name" value="RNase_PH_PNPase_1"/>
    <property type="match status" value="1"/>
</dbReference>
<dbReference type="CDD" id="cd11364">
    <property type="entry name" value="RNase_PH_PNPase_2"/>
    <property type="match status" value="1"/>
</dbReference>
<dbReference type="CDD" id="cd04472">
    <property type="entry name" value="S1_PNPase"/>
    <property type="match status" value="1"/>
</dbReference>
<dbReference type="FunFam" id="2.40.50.140:FF:000023">
    <property type="entry name" value="Polyribonucleotide nucleotidyltransferase"/>
    <property type="match status" value="1"/>
</dbReference>
<dbReference type="FunFam" id="3.30.1370.10:FF:000001">
    <property type="entry name" value="Polyribonucleotide nucleotidyltransferase"/>
    <property type="match status" value="1"/>
</dbReference>
<dbReference type="FunFam" id="3.30.230.70:FF:000001">
    <property type="entry name" value="Polyribonucleotide nucleotidyltransferase"/>
    <property type="match status" value="1"/>
</dbReference>
<dbReference type="FunFam" id="3.30.230.70:FF:000002">
    <property type="entry name" value="Polyribonucleotide nucleotidyltransferase"/>
    <property type="match status" value="1"/>
</dbReference>
<dbReference type="Gene3D" id="3.30.230.70">
    <property type="entry name" value="GHMP Kinase, N-terminal domain"/>
    <property type="match status" value="2"/>
</dbReference>
<dbReference type="Gene3D" id="3.30.1370.10">
    <property type="entry name" value="K Homology domain, type 1"/>
    <property type="match status" value="1"/>
</dbReference>
<dbReference type="Gene3D" id="2.40.50.140">
    <property type="entry name" value="Nucleic acid-binding proteins"/>
    <property type="match status" value="1"/>
</dbReference>
<dbReference type="HAMAP" id="MF_01595">
    <property type="entry name" value="PNPase"/>
    <property type="match status" value="1"/>
</dbReference>
<dbReference type="InterPro" id="IPR001247">
    <property type="entry name" value="ExoRNase_PH_dom1"/>
</dbReference>
<dbReference type="InterPro" id="IPR015847">
    <property type="entry name" value="ExoRNase_PH_dom2"/>
</dbReference>
<dbReference type="InterPro" id="IPR036345">
    <property type="entry name" value="ExoRNase_PH_dom2_sf"/>
</dbReference>
<dbReference type="InterPro" id="IPR004087">
    <property type="entry name" value="KH_dom"/>
</dbReference>
<dbReference type="InterPro" id="IPR004088">
    <property type="entry name" value="KH_dom_type_1"/>
</dbReference>
<dbReference type="InterPro" id="IPR036612">
    <property type="entry name" value="KH_dom_type_1_sf"/>
</dbReference>
<dbReference type="InterPro" id="IPR012340">
    <property type="entry name" value="NA-bd_OB-fold"/>
</dbReference>
<dbReference type="InterPro" id="IPR012162">
    <property type="entry name" value="PNPase"/>
</dbReference>
<dbReference type="InterPro" id="IPR027408">
    <property type="entry name" value="PNPase/RNase_PH_dom_sf"/>
</dbReference>
<dbReference type="InterPro" id="IPR015848">
    <property type="entry name" value="PNPase_PH_RNA-bd_bac/org-type"/>
</dbReference>
<dbReference type="InterPro" id="IPR036456">
    <property type="entry name" value="PNPase_PH_RNA-bd_sf"/>
</dbReference>
<dbReference type="InterPro" id="IPR020568">
    <property type="entry name" value="Ribosomal_Su5_D2-typ_SF"/>
</dbReference>
<dbReference type="InterPro" id="IPR003029">
    <property type="entry name" value="S1_domain"/>
</dbReference>
<dbReference type="NCBIfam" id="TIGR03591">
    <property type="entry name" value="polynuc_phos"/>
    <property type="match status" value="1"/>
</dbReference>
<dbReference type="NCBIfam" id="NF008805">
    <property type="entry name" value="PRK11824.1"/>
    <property type="match status" value="1"/>
</dbReference>
<dbReference type="PANTHER" id="PTHR11252">
    <property type="entry name" value="POLYRIBONUCLEOTIDE NUCLEOTIDYLTRANSFERASE"/>
    <property type="match status" value="1"/>
</dbReference>
<dbReference type="PANTHER" id="PTHR11252:SF0">
    <property type="entry name" value="POLYRIBONUCLEOTIDE NUCLEOTIDYLTRANSFERASE 1, MITOCHONDRIAL"/>
    <property type="match status" value="1"/>
</dbReference>
<dbReference type="Pfam" id="PF00013">
    <property type="entry name" value="KH_1"/>
    <property type="match status" value="1"/>
</dbReference>
<dbReference type="Pfam" id="PF03726">
    <property type="entry name" value="PNPase"/>
    <property type="match status" value="1"/>
</dbReference>
<dbReference type="Pfam" id="PF01138">
    <property type="entry name" value="RNase_PH"/>
    <property type="match status" value="2"/>
</dbReference>
<dbReference type="Pfam" id="PF03725">
    <property type="entry name" value="RNase_PH_C"/>
    <property type="match status" value="2"/>
</dbReference>
<dbReference type="Pfam" id="PF00575">
    <property type="entry name" value="S1"/>
    <property type="match status" value="1"/>
</dbReference>
<dbReference type="PIRSF" id="PIRSF005499">
    <property type="entry name" value="PNPase"/>
    <property type="match status" value="1"/>
</dbReference>
<dbReference type="SMART" id="SM00322">
    <property type="entry name" value="KH"/>
    <property type="match status" value="1"/>
</dbReference>
<dbReference type="SMART" id="SM00316">
    <property type="entry name" value="S1"/>
    <property type="match status" value="1"/>
</dbReference>
<dbReference type="SUPFAM" id="SSF54791">
    <property type="entry name" value="Eukaryotic type KH-domain (KH-domain type I)"/>
    <property type="match status" value="1"/>
</dbReference>
<dbReference type="SUPFAM" id="SSF50249">
    <property type="entry name" value="Nucleic acid-binding proteins"/>
    <property type="match status" value="1"/>
</dbReference>
<dbReference type="SUPFAM" id="SSF46915">
    <property type="entry name" value="Polynucleotide phosphorylase/guanosine pentaphosphate synthase (PNPase/GPSI), domain 3"/>
    <property type="match status" value="1"/>
</dbReference>
<dbReference type="SUPFAM" id="SSF55666">
    <property type="entry name" value="Ribonuclease PH domain 2-like"/>
    <property type="match status" value="2"/>
</dbReference>
<dbReference type="SUPFAM" id="SSF54211">
    <property type="entry name" value="Ribosomal protein S5 domain 2-like"/>
    <property type="match status" value="2"/>
</dbReference>
<dbReference type="PROSITE" id="PS50084">
    <property type="entry name" value="KH_TYPE_1"/>
    <property type="match status" value="1"/>
</dbReference>
<dbReference type="PROSITE" id="PS50126">
    <property type="entry name" value="S1"/>
    <property type="match status" value="1"/>
</dbReference>
<organism>
    <name type="scientific">Myxococcus xanthus (strain DK1622)</name>
    <dbReference type="NCBI Taxonomy" id="246197"/>
    <lineage>
        <taxon>Bacteria</taxon>
        <taxon>Pseudomonadati</taxon>
        <taxon>Myxococcota</taxon>
        <taxon>Myxococcia</taxon>
        <taxon>Myxococcales</taxon>
        <taxon>Cystobacterineae</taxon>
        <taxon>Myxococcaceae</taxon>
        <taxon>Myxococcus</taxon>
    </lineage>
</organism>
<protein>
    <recommendedName>
        <fullName evidence="1">Polyribonucleotide nucleotidyltransferase</fullName>
        <ecNumber evidence="1">2.7.7.8</ecNumber>
    </recommendedName>
    <alternativeName>
        <fullName evidence="1">Polynucleotide phosphorylase</fullName>
        <shortName evidence="1">PNPase</shortName>
    </alternativeName>
</protein>
<accession>Q1DAM1</accession>
<comment type="function">
    <text evidence="1">Involved in mRNA degradation. Catalyzes the phosphorolysis of single-stranded polyribonucleotides processively in the 3'- to 5'-direction.</text>
</comment>
<comment type="catalytic activity">
    <reaction evidence="1">
        <text>RNA(n+1) + phosphate = RNA(n) + a ribonucleoside 5'-diphosphate</text>
        <dbReference type="Rhea" id="RHEA:22096"/>
        <dbReference type="Rhea" id="RHEA-COMP:14527"/>
        <dbReference type="Rhea" id="RHEA-COMP:17342"/>
        <dbReference type="ChEBI" id="CHEBI:43474"/>
        <dbReference type="ChEBI" id="CHEBI:57930"/>
        <dbReference type="ChEBI" id="CHEBI:140395"/>
        <dbReference type="EC" id="2.7.7.8"/>
    </reaction>
</comment>
<comment type="cofactor">
    <cofactor evidence="1">
        <name>Mg(2+)</name>
        <dbReference type="ChEBI" id="CHEBI:18420"/>
    </cofactor>
</comment>
<comment type="subcellular location">
    <subcellularLocation>
        <location evidence="1">Cytoplasm</location>
    </subcellularLocation>
</comment>
<comment type="similarity">
    <text evidence="1">Belongs to the polyribonucleotide nucleotidyltransferase family.</text>
</comment>
<reference key="1">
    <citation type="journal article" date="2006" name="Proc. Natl. Acad. Sci. U.S.A.">
        <title>Evolution of sensory complexity recorded in a myxobacterial genome.</title>
        <authorList>
            <person name="Goldman B.S."/>
            <person name="Nierman W.C."/>
            <person name="Kaiser D."/>
            <person name="Slater S.C."/>
            <person name="Durkin A.S."/>
            <person name="Eisen J.A."/>
            <person name="Ronning C.M."/>
            <person name="Barbazuk W.B."/>
            <person name="Blanchard M."/>
            <person name="Field C."/>
            <person name="Halling C."/>
            <person name="Hinkle G."/>
            <person name="Iartchuk O."/>
            <person name="Kim H.S."/>
            <person name="Mackenzie C."/>
            <person name="Madupu R."/>
            <person name="Miller N."/>
            <person name="Shvartsbeyn A."/>
            <person name="Sullivan S.A."/>
            <person name="Vaudin M."/>
            <person name="Wiegand R."/>
            <person name="Kaplan H.B."/>
        </authorList>
    </citation>
    <scope>NUCLEOTIDE SEQUENCE [LARGE SCALE GENOMIC DNA]</scope>
    <source>
        <strain>DK1622</strain>
    </source>
</reference>
<gene>
    <name evidence="1" type="primary">pnp</name>
    <name type="ordered locus">MXAN_2073</name>
</gene>
<sequence>MLKKSVKIGESELSIEVGRLAKQADGSVVVRYGDTMLLVTAVSAREKKDIDFLPLTVEYQEKLYSAGRIPGSYFKREGRLTEKETLASRLVDRSCRPLFPEGYAYETQIIASVISSDPENEGDIHGITGASAALWVSDIPFDGPIAGIRVGRVGGQLVANPTAKQREQSDLDLVMAVSRKAIVMVEGGAEEVSEADMVAALDFGFTTAQPALDLQDELRRELNKQVRSFEKPAAVDEGLRAKVRELAMDGIKAGYGIKEKGARYEALGKTKKEALAKLKEQLGDGYTPLVEKHAKAVVEDLKYEHMREMTVNGGRIGDRGHDVVRSITCEVGVLPRTHGSAVFTRGETQALVVTTLGTSDDEQRLEMLGGMAFKRFMLHYNFPPFSVNETKPLRGPGRREVGHGALAERALRNMVPKSESFPYTVRLVSDILESNGSSSMASVCGGTLALMDAGVPLKAPVAGIAMGLVKEGDKIAILSDILGDEDHLGDMDFKVCGTSKGITSIQMDIKITGLTTEIMSRALEQARQGRLHILGEMLKTLAESRKEISQYAPRITTIQIRPEFIKNVIGPGGKVIKDIIARTGAAINIEDSGRVDIASANGEAVKAAIAMIQALTREAEIGKIYTGTVRKIAEFGAFVELFPGTDGLIHISELSDKRVKSVSDVLNEGDEVLVKVVSIDKTGKIRLSRKEAMAERAAQQGAAAGEAAAQPAPAPTQPDAKA</sequence>
<evidence type="ECO:0000255" key="1">
    <source>
        <dbReference type="HAMAP-Rule" id="MF_01595"/>
    </source>
</evidence>
<evidence type="ECO:0000256" key="2">
    <source>
        <dbReference type="SAM" id="MobiDB-lite"/>
    </source>
</evidence>
<name>PNP_MYXXD</name>